<organism>
    <name type="scientific">Clostridium acetobutylicum (strain ATCC 824 / DSM 792 / JCM 1419 / IAM 19013 / LMG 5710 / NBRC 13948 / NRRL B-527 / VKM B-1787 / 2291 / W)</name>
    <dbReference type="NCBI Taxonomy" id="272562"/>
    <lineage>
        <taxon>Bacteria</taxon>
        <taxon>Bacillati</taxon>
        <taxon>Bacillota</taxon>
        <taxon>Clostridia</taxon>
        <taxon>Eubacteriales</taxon>
        <taxon>Clostridiaceae</taxon>
        <taxon>Clostridium</taxon>
    </lineage>
</organism>
<name>HPRK_CLOAB</name>
<evidence type="ECO:0000255" key="1">
    <source>
        <dbReference type="HAMAP-Rule" id="MF_01249"/>
    </source>
</evidence>
<keyword id="KW-0067">ATP-binding</keyword>
<keyword id="KW-0119">Carbohydrate metabolism</keyword>
<keyword id="KW-0418">Kinase</keyword>
<keyword id="KW-0460">Magnesium</keyword>
<keyword id="KW-0479">Metal-binding</keyword>
<keyword id="KW-0511">Multifunctional enzyme</keyword>
<keyword id="KW-0547">Nucleotide-binding</keyword>
<keyword id="KW-1185">Reference proteome</keyword>
<keyword id="KW-0723">Serine/threonine-protein kinase</keyword>
<keyword id="KW-0808">Transferase</keyword>
<sequence length="304" mass="34445">MQVSIEDIIENLDLEVLVKGKDGIKLGLSDINRPGLQFAGFYDYFGNERVQVIGKAEWSFLNAMPPEIREKRIRKYFQFETPCIVLARGLKPQKELLDCSKEYNRWLLRSKAQTTRFINKIMNYLDDKLAPETRIHGVLVDIYGLGILITGESGIGKSETALELIKRGHRLVADDAVDIKEIESVLVGKSPYITSGMLEVRGMGIIDVPALYGLSSVLSEKNINLVIYLEQWKEGRDYDRLGTDDEHIKILNIPVRKMTLPIRPGRNVAVIIEAAAANYRYNLSSKISPVDTINKRIEESTNYD</sequence>
<proteinExistence type="inferred from homology"/>
<feature type="chain" id="PRO_0000058952" description="HPr kinase/phosphorylase">
    <location>
        <begin position="1"/>
        <end position="304"/>
    </location>
</feature>
<feature type="region of interest" description="Important for the catalytic mechanism of both phosphorylation and dephosphorylation" evidence="1">
    <location>
        <begin position="198"/>
        <end position="207"/>
    </location>
</feature>
<feature type="region of interest" description="Important for the catalytic mechanism of dephosphorylation" evidence="1">
    <location>
        <begin position="261"/>
        <end position="266"/>
    </location>
</feature>
<feature type="active site" evidence="1">
    <location>
        <position position="136"/>
    </location>
</feature>
<feature type="active site" evidence="1">
    <location>
        <position position="157"/>
    </location>
</feature>
<feature type="active site" description="Proton acceptor; for phosphorylation activity. Proton donor; for dephosphorylation activity" evidence="1">
    <location>
        <position position="175"/>
    </location>
</feature>
<feature type="active site" evidence="1">
    <location>
        <position position="240"/>
    </location>
</feature>
<feature type="binding site" evidence="1">
    <location>
        <begin position="151"/>
        <end position="158"/>
    </location>
    <ligand>
        <name>ATP</name>
        <dbReference type="ChEBI" id="CHEBI:30616"/>
    </ligand>
</feature>
<feature type="binding site" evidence="1">
    <location>
        <position position="158"/>
    </location>
    <ligand>
        <name>Mg(2+)</name>
        <dbReference type="ChEBI" id="CHEBI:18420"/>
    </ligand>
</feature>
<feature type="binding site" evidence="1">
    <location>
        <position position="199"/>
    </location>
    <ligand>
        <name>Mg(2+)</name>
        <dbReference type="ChEBI" id="CHEBI:18420"/>
    </ligand>
</feature>
<comment type="function">
    <text evidence="1">Catalyzes the ATP- as well as the pyrophosphate-dependent phosphorylation of a specific serine residue in HPr, a phosphocarrier protein of the phosphoenolpyruvate-dependent sugar phosphotransferase system (PTS). HprK/P also catalyzes the pyrophosphate-producing, inorganic phosphate-dependent dephosphorylation (phosphorolysis) of seryl-phosphorylated HPr (P-Ser-HPr). The two antagonistic activities of HprK/P are regulated by several intracellular metabolites, which change their concentration in response to the absence or presence of rapidly metabolisable carbon sources (glucose, fructose, etc.) in the growth medium. Therefore, by controlling the phosphorylation state of HPr, HPrK/P is a sensor enzyme that plays a major role in the regulation of carbon metabolism and sugar transport: it mediates carbon catabolite repression (CCR), and regulates PTS-catalyzed carbohydrate uptake and inducer exclusion.</text>
</comment>
<comment type="catalytic activity">
    <reaction evidence="1">
        <text>[HPr protein]-L-serine + ATP = [HPr protein]-O-phospho-L-serine + ADP + H(+)</text>
        <dbReference type="Rhea" id="RHEA:46600"/>
        <dbReference type="Rhea" id="RHEA-COMP:11602"/>
        <dbReference type="Rhea" id="RHEA-COMP:11603"/>
        <dbReference type="ChEBI" id="CHEBI:15378"/>
        <dbReference type="ChEBI" id="CHEBI:29999"/>
        <dbReference type="ChEBI" id="CHEBI:30616"/>
        <dbReference type="ChEBI" id="CHEBI:83421"/>
        <dbReference type="ChEBI" id="CHEBI:456216"/>
    </reaction>
</comment>
<comment type="catalytic activity">
    <reaction evidence="1">
        <text>[HPr protein]-O-phospho-L-serine + phosphate + H(+) = [HPr protein]-L-serine + diphosphate</text>
        <dbReference type="Rhea" id="RHEA:46604"/>
        <dbReference type="Rhea" id="RHEA-COMP:11602"/>
        <dbReference type="Rhea" id="RHEA-COMP:11603"/>
        <dbReference type="ChEBI" id="CHEBI:15378"/>
        <dbReference type="ChEBI" id="CHEBI:29999"/>
        <dbReference type="ChEBI" id="CHEBI:33019"/>
        <dbReference type="ChEBI" id="CHEBI:43474"/>
        <dbReference type="ChEBI" id="CHEBI:83421"/>
    </reaction>
</comment>
<comment type="cofactor">
    <cofactor evidence="1">
        <name>Mg(2+)</name>
        <dbReference type="ChEBI" id="CHEBI:18420"/>
    </cofactor>
</comment>
<comment type="subunit">
    <text evidence="1">Homohexamer.</text>
</comment>
<comment type="domain">
    <text evidence="1">The Walker A ATP-binding motif also binds Pi and PPi.</text>
</comment>
<comment type="miscellaneous">
    <text evidence="1">Both phosphorylation and phosphorolysis are carried out by the same active site and suggest a common mechanism for both reactions.</text>
</comment>
<comment type="similarity">
    <text evidence="1">Belongs to the HPrK/P family.</text>
</comment>
<dbReference type="EC" id="2.7.11.-" evidence="1"/>
<dbReference type="EC" id="2.7.4.-" evidence="1"/>
<dbReference type="EMBL" id="AE001437">
    <property type="protein sequence ID" value="AAK79063.1"/>
    <property type="molecule type" value="Genomic_DNA"/>
</dbReference>
<dbReference type="PIR" id="D97034">
    <property type="entry name" value="D97034"/>
</dbReference>
<dbReference type="RefSeq" id="NP_347723.1">
    <property type="nucleotide sequence ID" value="NC_003030.1"/>
</dbReference>
<dbReference type="RefSeq" id="WP_010964404.1">
    <property type="nucleotide sequence ID" value="NC_003030.1"/>
</dbReference>
<dbReference type="SMR" id="Q97K32"/>
<dbReference type="STRING" id="272562.CA_C1089"/>
<dbReference type="GeneID" id="44997601"/>
<dbReference type="KEGG" id="cac:CA_C1089"/>
<dbReference type="PATRIC" id="fig|272562.8.peg.1297"/>
<dbReference type="eggNOG" id="COG1493">
    <property type="taxonomic scope" value="Bacteria"/>
</dbReference>
<dbReference type="HOGENOM" id="CLU_052030_0_1_9"/>
<dbReference type="OrthoDB" id="9778803at2"/>
<dbReference type="Proteomes" id="UP000000814">
    <property type="component" value="Chromosome"/>
</dbReference>
<dbReference type="GO" id="GO:0005524">
    <property type="term" value="F:ATP binding"/>
    <property type="evidence" value="ECO:0007669"/>
    <property type="project" value="UniProtKB-UniRule"/>
</dbReference>
<dbReference type="GO" id="GO:0000287">
    <property type="term" value="F:magnesium ion binding"/>
    <property type="evidence" value="ECO:0007669"/>
    <property type="project" value="UniProtKB-UniRule"/>
</dbReference>
<dbReference type="GO" id="GO:0000155">
    <property type="term" value="F:phosphorelay sensor kinase activity"/>
    <property type="evidence" value="ECO:0007669"/>
    <property type="project" value="InterPro"/>
</dbReference>
<dbReference type="GO" id="GO:0004674">
    <property type="term" value="F:protein serine/threonine kinase activity"/>
    <property type="evidence" value="ECO:0007669"/>
    <property type="project" value="UniProtKB-KW"/>
</dbReference>
<dbReference type="GO" id="GO:0004712">
    <property type="term" value="F:protein serine/threonine/tyrosine kinase activity"/>
    <property type="evidence" value="ECO:0007669"/>
    <property type="project" value="UniProtKB-UniRule"/>
</dbReference>
<dbReference type="GO" id="GO:0006109">
    <property type="term" value="P:regulation of carbohydrate metabolic process"/>
    <property type="evidence" value="ECO:0007669"/>
    <property type="project" value="UniProtKB-UniRule"/>
</dbReference>
<dbReference type="CDD" id="cd01918">
    <property type="entry name" value="HprK_C"/>
    <property type="match status" value="1"/>
</dbReference>
<dbReference type="FunFam" id="3.40.50.300:FF:000174">
    <property type="entry name" value="HPr kinase/phosphorylase"/>
    <property type="match status" value="1"/>
</dbReference>
<dbReference type="Gene3D" id="3.40.1390.20">
    <property type="entry name" value="HprK N-terminal domain-like"/>
    <property type="match status" value="1"/>
</dbReference>
<dbReference type="Gene3D" id="3.40.50.300">
    <property type="entry name" value="P-loop containing nucleotide triphosphate hydrolases"/>
    <property type="match status" value="1"/>
</dbReference>
<dbReference type="HAMAP" id="MF_01249">
    <property type="entry name" value="HPr_kinase"/>
    <property type="match status" value="1"/>
</dbReference>
<dbReference type="InterPro" id="IPR003755">
    <property type="entry name" value="HPr(Ser)_kin/Pase"/>
</dbReference>
<dbReference type="InterPro" id="IPR011104">
    <property type="entry name" value="Hpr_kin/Pase_C"/>
</dbReference>
<dbReference type="InterPro" id="IPR011126">
    <property type="entry name" value="Hpr_kin/Pase_Hpr_N"/>
</dbReference>
<dbReference type="InterPro" id="IPR027417">
    <property type="entry name" value="P-loop_NTPase"/>
</dbReference>
<dbReference type="InterPro" id="IPR028979">
    <property type="entry name" value="Ser_kin/Pase_Hpr-like_N_sf"/>
</dbReference>
<dbReference type="NCBIfam" id="TIGR00679">
    <property type="entry name" value="hpr-ser"/>
    <property type="match status" value="1"/>
</dbReference>
<dbReference type="PANTHER" id="PTHR30305:SF1">
    <property type="entry name" value="HPR KINASE_PHOSPHORYLASE"/>
    <property type="match status" value="1"/>
</dbReference>
<dbReference type="PANTHER" id="PTHR30305">
    <property type="entry name" value="PROTEIN YJDM-RELATED"/>
    <property type="match status" value="1"/>
</dbReference>
<dbReference type="Pfam" id="PF07475">
    <property type="entry name" value="Hpr_kinase_C"/>
    <property type="match status" value="1"/>
</dbReference>
<dbReference type="Pfam" id="PF02603">
    <property type="entry name" value="Hpr_kinase_N"/>
    <property type="match status" value="1"/>
</dbReference>
<dbReference type="SUPFAM" id="SSF75138">
    <property type="entry name" value="HprK N-terminal domain-like"/>
    <property type="match status" value="1"/>
</dbReference>
<dbReference type="SUPFAM" id="SSF53795">
    <property type="entry name" value="PEP carboxykinase-like"/>
    <property type="match status" value="1"/>
</dbReference>
<reference key="1">
    <citation type="journal article" date="2001" name="J. Bacteriol.">
        <title>Genome sequence and comparative analysis of the solvent-producing bacterium Clostridium acetobutylicum.</title>
        <authorList>
            <person name="Noelling J."/>
            <person name="Breton G."/>
            <person name="Omelchenko M.V."/>
            <person name="Makarova K.S."/>
            <person name="Zeng Q."/>
            <person name="Gibson R."/>
            <person name="Lee H.M."/>
            <person name="Dubois J."/>
            <person name="Qiu D."/>
            <person name="Hitti J."/>
            <person name="Wolf Y.I."/>
            <person name="Tatusov R.L."/>
            <person name="Sabathe F."/>
            <person name="Doucette-Stamm L.A."/>
            <person name="Soucaille P."/>
            <person name="Daly M.J."/>
            <person name="Bennett G.N."/>
            <person name="Koonin E.V."/>
            <person name="Smith D.R."/>
        </authorList>
    </citation>
    <scope>NUCLEOTIDE SEQUENCE [LARGE SCALE GENOMIC DNA]</scope>
    <source>
        <strain>ATCC 824 / DSM 792 / JCM 1419 / IAM 19013 / LMG 5710 / NBRC 13948 / NRRL B-527 / VKM B-1787 / 2291 / W</strain>
    </source>
</reference>
<protein>
    <recommendedName>
        <fullName evidence="1">HPr kinase/phosphorylase</fullName>
        <shortName evidence="1">HPrK/P</shortName>
        <ecNumber evidence="1">2.7.11.-</ecNumber>
        <ecNumber evidence="1">2.7.4.-</ecNumber>
    </recommendedName>
    <alternativeName>
        <fullName evidence="1">HPr(Ser) kinase/phosphorylase</fullName>
    </alternativeName>
</protein>
<accession>Q97K32</accession>
<gene>
    <name evidence="1" type="primary">hprK</name>
    <name type="ordered locus">CA_C1089</name>
</gene>